<protein>
    <recommendedName>
        <fullName evidence="1">DNA primase small subunit PriS</fullName>
        <ecNumber evidence="1">2.7.7.-</ecNumber>
    </recommendedName>
</protein>
<dbReference type="EC" id="2.7.7.-" evidence="1"/>
<dbReference type="EMBL" id="BA000002">
    <property type="protein sequence ID" value="BAA79398.2"/>
    <property type="molecule type" value="Genomic_DNA"/>
</dbReference>
<dbReference type="PIR" id="B72738">
    <property type="entry name" value="B72738"/>
</dbReference>
<dbReference type="SMR" id="Q9YEZ8"/>
<dbReference type="STRING" id="272557.APE_0438.1"/>
<dbReference type="EnsemblBacteria" id="BAA79398">
    <property type="protein sequence ID" value="BAA79398"/>
    <property type="gene ID" value="APE_0438.1"/>
</dbReference>
<dbReference type="KEGG" id="ape:APE_0438.1"/>
<dbReference type="eggNOG" id="arCOG04110">
    <property type="taxonomic scope" value="Archaea"/>
</dbReference>
<dbReference type="Proteomes" id="UP000002518">
    <property type="component" value="Chromosome"/>
</dbReference>
<dbReference type="GO" id="GO:0000428">
    <property type="term" value="C:DNA-directed RNA polymerase complex"/>
    <property type="evidence" value="ECO:0007669"/>
    <property type="project" value="UniProtKB-KW"/>
</dbReference>
<dbReference type="GO" id="GO:1990077">
    <property type="term" value="C:primosome complex"/>
    <property type="evidence" value="ECO:0007669"/>
    <property type="project" value="UniProtKB-KW"/>
</dbReference>
<dbReference type="GO" id="GO:0003899">
    <property type="term" value="F:DNA-directed RNA polymerase activity"/>
    <property type="evidence" value="ECO:0007669"/>
    <property type="project" value="InterPro"/>
</dbReference>
<dbReference type="GO" id="GO:0046872">
    <property type="term" value="F:metal ion binding"/>
    <property type="evidence" value="ECO:0007669"/>
    <property type="project" value="UniProtKB-KW"/>
</dbReference>
<dbReference type="GO" id="GO:0006269">
    <property type="term" value="P:DNA replication, synthesis of primer"/>
    <property type="evidence" value="ECO:0007669"/>
    <property type="project" value="UniProtKB-UniRule"/>
</dbReference>
<dbReference type="CDD" id="cd04860">
    <property type="entry name" value="AE_Prim_S"/>
    <property type="match status" value="1"/>
</dbReference>
<dbReference type="Gene3D" id="3.90.920.10">
    <property type="entry name" value="DNA primase, PRIM domain"/>
    <property type="match status" value="1"/>
</dbReference>
<dbReference type="HAMAP" id="MF_00700">
    <property type="entry name" value="DNA_primase_sml_arc"/>
    <property type="match status" value="1"/>
</dbReference>
<dbReference type="InterPro" id="IPR002755">
    <property type="entry name" value="DNA_primase_S"/>
</dbReference>
<dbReference type="InterPro" id="IPR014052">
    <property type="entry name" value="DNA_primase_ssu_euk/arc"/>
</dbReference>
<dbReference type="InterPro" id="IPR023639">
    <property type="entry name" value="DNA_primase_ssu_PriS"/>
</dbReference>
<dbReference type="NCBIfam" id="NF001641">
    <property type="entry name" value="PRK00419.1-3"/>
    <property type="match status" value="1"/>
</dbReference>
<dbReference type="PANTHER" id="PTHR10536">
    <property type="entry name" value="DNA PRIMASE SMALL SUBUNIT"/>
    <property type="match status" value="1"/>
</dbReference>
<dbReference type="Pfam" id="PF01896">
    <property type="entry name" value="DNA_primase_S"/>
    <property type="match status" value="1"/>
</dbReference>
<dbReference type="SUPFAM" id="SSF56747">
    <property type="entry name" value="Prim-pol domain"/>
    <property type="match status" value="1"/>
</dbReference>
<proteinExistence type="inferred from homology"/>
<reference key="1">
    <citation type="journal article" date="1999" name="DNA Res.">
        <title>Complete genome sequence of an aerobic hyper-thermophilic crenarchaeon, Aeropyrum pernix K1.</title>
        <authorList>
            <person name="Kawarabayasi Y."/>
            <person name="Hino Y."/>
            <person name="Horikawa H."/>
            <person name="Yamazaki S."/>
            <person name="Haikawa Y."/>
            <person name="Jin-no K."/>
            <person name="Takahashi M."/>
            <person name="Sekine M."/>
            <person name="Baba S."/>
            <person name="Ankai A."/>
            <person name="Kosugi H."/>
            <person name="Hosoyama A."/>
            <person name="Fukui S."/>
            <person name="Nagai Y."/>
            <person name="Nishijima K."/>
            <person name="Nakazawa H."/>
            <person name="Takamiya M."/>
            <person name="Masuda S."/>
            <person name="Funahashi T."/>
            <person name="Tanaka T."/>
            <person name="Kudoh Y."/>
            <person name="Yamazaki J."/>
            <person name="Kushida N."/>
            <person name="Oguchi A."/>
            <person name="Aoki K."/>
            <person name="Kubota K."/>
            <person name="Nakamura Y."/>
            <person name="Nomura N."/>
            <person name="Sako Y."/>
            <person name="Kikuchi H."/>
        </authorList>
    </citation>
    <scope>NUCLEOTIDE SEQUENCE [LARGE SCALE GENOMIC DNA]</scope>
    <source>
        <strain>ATCC 700893 / DSM 11879 / JCM 9820 / NBRC 100138 / K1</strain>
    </source>
</reference>
<name>PRIS_AERPE</name>
<sequence>MVEARGGLDPRRLFKAYYSLSPPVEEPRDIAYREFAFQLFDGDVYVRHIGFDSMEELLSYMAREAPKNAYYSVARYSLPTARSMEEKGWLGSELMFDIDVDSLEGCGEVLGDSCLSRGYKQAVRLVEALYRDFGVPSTLYFTGNRGFHVLADCGWCRRLGREERREIARYFTLEGLRLELIIPRPGRRGVRPAPPSPDDPGLRGWIARAALERGVDLSAVHEAIEDLLDDVRVAIDVKVTQDISRLARIVGSLNGKAGLLVARLGLEGFHPGDWLSPFRGEVEFRASARLEESRILGRTVSLEPGRVYSMPAHIAVLLQLKGYGAVAGGEVVVRAAAGWRPL</sequence>
<organism>
    <name type="scientific">Aeropyrum pernix (strain ATCC 700893 / DSM 11879 / JCM 9820 / NBRC 100138 / K1)</name>
    <dbReference type="NCBI Taxonomy" id="272557"/>
    <lineage>
        <taxon>Archaea</taxon>
        <taxon>Thermoproteota</taxon>
        <taxon>Thermoprotei</taxon>
        <taxon>Desulfurococcales</taxon>
        <taxon>Desulfurococcaceae</taxon>
        <taxon>Aeropyrum</taxon>
    </lineage>
</organism>
<keyword id="KW-0235">DNA replication</keyword>
<keyword id="KW-0240">DNA-directed RNA polymerase</keyword>
<keyword id="KW-0460">Magnesium</keyword>
<keyword id="KW-0464">Manganese</keyword>
<keyword id="KW-0479">Metal-binding</keyword>
<keyword id="KW-0548">Nucleotidyltransferase</keyword>
<keyword id="KW-0639">Primosome</keyword>
<keyword id="KW-1185">Reference proteome</keyword>
<keyword id="KW-0804">Transcription</keyword>
<keyword id="KW-0808">Transferase</keyword>
<evidence type="ECO:0000255" key="1">
    <source>
        <dbReference type="HAMAP-Rule" id="MF_00700"/>
    </source>
</evidence>
<feature type="chain" id="PRO_0000046737" description="DNA primase small subunit PriS">
    <location>
        <begin position="1"/>
        <end position="342"/>
    </location>
</feature>
<feature type="active site" evidence="1">
    <location>
        <position position="97"/>
    </location>
</feature>
<feature type="active site" evidence="1">
    <location>
        <position position="99"/>
    </location>
</feature>
<feature type="active site" evidence="1">
    <location>
        <position position="236"/>
    </location>
</feature>
<gene>
    <name evidence="1" type="primary">priS</name>
    <name type="synonym">priA</name>
    <name type="ordered locus">APE_0438.1</name>
</gene>
<accession>Q9YEZ8</accession>
<comment type="function">
    <text evidence="1">Catalytic subunit of DNA primase, an RNA polymerase that catalyzes the synthesis of short RNA molecules used as primers for DNA polymerase during DNA replication. The small subunit contains the primase catalytic core and has DNA synthesis activity on its own. Binding to the large subunit stabilizes and modulates the activity, increasing the rate of DNA synthesis while decreasing the length of the DNA fragments, and conferring RNA synthesis capability. The DNA polymerase activity may enable DNA primase to also catalyze primer extension after primer synthesis. May also play a role in DNA repair.</text>
</comment>
<comment type="cofactor">
    <cofactor evidence="1">
        <name>Mg(2+)</name>
        <dbReference type="ChEBI" id="CHEBI:18420"/>
    </cofactor>
    <cofactor evidence="1">
        <name>Mn(2+)</name>
        <dbReference type="ChEBI" id="CHEBI:29035"/>
    </cofactor>
</comment>
<comment type="subunit">
    <text evidence="1">Heterodimer of a small subunit (PriS) and a large subunit (PriL).</text>
</comment>
<comment type="similarity">
    <text evidence="1">Belongs to the eukaryotic-type primase small subunit family.</text>
</comment>